<comment type="function">
    <text evidence="1">Bifunctional serine/threonine kinase and phosphorylase involved in the regulation of the phosphoenolpyruvate synthase (PEPS) by catalyzing its phosphorylation/dephosphorylation.</text>
</comment>
<comment type="catalytic activity">
    <reaction evidence="1">
        <text>[pyruvate, water dikinase] + ADP = [pyruvate, water dikinase]-phosphate + AMP + H(+)</text>
        <dbReference type="Rhea" id="RHEA:46020"/>
        <dbReference type="Rhea" id="RHEA-COMP:11425"/>
        <dbReference type="Rhea" id="RHEA-COMP:11426"/>
        <dbReference type="ChEBI" id="CHEBI:15378"/>
        <dbReference type="ChEBI" id="CHEBI:43176"/>
        <dbReference type="ChEBI" id="CHEBI:68546"/>
        <dbReference type="ChEBI" id="CHEBI:456215"/>
        <dbReference type="ChEBI" id="CHEBI:456216"/>
        <dbReference type="EC" id="2.7.11.33"/>
    </reaction>
</comment>
<comment type="catalytic activity">
    <reaction evidence="1">
        <text>[pyruvate, water dikinase]-phosphate + phosphate + H(+) = [pyruvate, water dikinase] + diphosphate</text>
        <dbReference type="Rhea" id="RHEA:48580"/>
        <dbReference type="Rhea" id="RHEA-COMP:11425"/>
        <dbReference type="Rhea" id="RHEA-COMP:11426"/>
        <dbReference type="ChEBI" id="CHEBI:15378"/>
        <dbReference type="ChEBI" id="CHEBI:33019"/>
        <dbReference type="ChEBI" id="CHEBI:43176"/>
        <dbReference type="ChEBI" id="CHEBI:43474"/>
        <dbReference type="ChEBI" id="CHEBI:68546"/>
        <dbReference type="EC" id="2.7.4.28"/>
    </reaction>
</comment>
<comment type="similarity">
    <text evidence="1">Belongs to the pyruvate, phosphate/water dikinase regulatory protein family. PSRP subfamily.</text>
</comment>
<evidence type="ECO:0000255" key="1">
    <source>
        <dbReference type="HAMAP-Rule" id="MF_01062"/>
    </source>
</evidence>
<name>PSRP_SALNS</name>
<protein>
    <recommendedName>
        <fullName evidence="1">Phosphoenolpyruvate synthase regulatory protein</fullName>
        <shortName evidence="1">PEP synthase regulatory protein</shortName>
        <shortName evidence="1">PSRP</shortName>
        <ecNumber evidence="1">2.7.11.33</ecNumber>
        <ecNumber evidence="1">2.7.4.28</ecNumber>
    </recommendedName>
    <alternativeName>
        <fullName evidence="1">Pyruvate, water dikinase regulatory protein</fullName>
    </alternativeName>
</protein>
<accession>B4T4P3</accession>
<feature type="chain" id="PRO_1000136493" description="Phosphoenolpyruvate synthase regulatory protein">
    <location>
        <begin position="1"/>
        <end position="277"/>
    </location>
</feature>
<feature type="binding site" evidence="1">
    <location>
        <begin position="157"/>
        <end position="164"/>
    </location>
    <ligand>
        <name>ADP</name>
        <dbReference type="ChEBI" id="CHEBI:456216"/>
    </ligand>
</feature>
<organism>
    <name type="scientific">Salmonella newport (strain SL254)</name>
    <dbReference type="NCBI Taxonomy" id="423368"/>
    <lineage>
        <taxon>Bacteria</taxon>
        <taxon>Pseudomonadati</taxon>
        <taxon>Pseudomonadota</taxon>
        <taxon>Gammaproteobacteria</taxon>
        <taxon>Enterobacterales</taxon>
        <taxon>Enterobacteriaceae</taxon>
        <taxon>Salmonella</taxon>
    </lineage>
</organism>
<keyword id="KW-0418">Kinase</keyword>
<keyword id="KW-0547">Nucleotide-binding</keyword>
<keyword id="KW-0723">Serine/threonine-protein kinase</keyword>
<keyword id="KW-0808">Transferase</keyword>
<proteinExistence type="inferred from homology"/>
<reference key="1">
    <citation type="journal article" date="2011" name="J. Bacteriol.">
        <title>Comparative genomics of 28 Salmonella enterica isolates: evidence for CRISPR-mediated adaptive sublineage evolution.</title>
        <authorList>
            <person name="Fricke W.F."/>
            <person name="Mammel M.K."/>
            <person name="McDermott P.F."/>
            <person name="Tartera C."/>
            <person name="White D.G."/>
            <person name="Leclerc J.E."/>
            <person name="Ravel J."/>
            <person name="Cebula T.A."/>
        </authorList>
    </citation>
    <scope>NUCLEOTIDE SEQUENCE [LARGE SCALE GENOMIC DNA]</scope>
    <source>
        <strain>SL254</strain>
    </source>
</reference>
<dbReference type="EC" id="2.7.11.33" evidence="1"/>
<dbReference type="EC" id="2.7.4.28" evidence="1"/>
<dbReference type="EMBL" id="CP001113">
    <property type="protein sequence ID" value="ACF61534.1"/>
    <property type="molecule type" value="Genomic_DNA"/>
</dbReference>
<dbReference type="RefSeq" id="WP_000370992.1">
    <property type="nucleotide sequence ID" value="NZ_CCMR01000003.1"/>
</dbReference>
<dbReference type="SMR" id="B4T4P3"/>
<dbReference type="KEGG" id="see:SNSL254_A1459"/>
<dbReference type="HOGENOM" id="CLU_046206_1_0_6"/>
<dbReference type="Proteomes" id="UP000008824">
    <property type="component" value="Chromosome"/>
</dbReference>
<dbReference type="GO" id="GO:0043531">
    <property type="term" value="F:ADP binding"/>
    <property type="evidence" value="ECO:0007669"/>
    <property type="project" value="UniProtKB-UniRule"/>
</dbReference>
<dbReference type="GO" id="GO:0005524">
    <property type="term" value="F:ATP binding"/>
    <property type="evidence" value="ECO:0007669"/>
    <property type="project" value="InterPro"/>
</dbReference>
<dbReference type="GO" id="GO:0016776">
    <property type="term" value="F:phosphotransferase activity, phosphate group as acceptor"/>
    <property type="evidence" value="ECO:0007669"/>
    <property type="project" value="UniProtKB-UniRule"/>
</dbReference>
<dbReference type="GO" id="GO:0004674">
    <property type="term" value="F:protein serine/threonine kinase activity"/>
    <property type="evidence" value="ECO:0007669"/>
    <property type="project" value="UniProtKB-UniRule"/>
</dbReference>
<dbReference type="HAMAP" id="MF_01062">
    <property type="entry name" value="PSRP"/>
    <property type="match status" value="1"/>
</dbReference>
<dbReference type="InterPro" id="IPR005177">
    <property type="entry name" value="Kinase-pyrophosphorylase"/>
</dbReference>
<dbReference type="InterPro" id="IPR026530">
    <property type="entry name" value="PSRP"/>
</dbReference>
<dbReference type="NCBIfam" id="NF003742">
    <property type="entry name" value="PRK05339.1"/>
    <property type="match status" value="1"/>
</dbReference>
<dbReference type="PANTHER" id="PTHR31756">
    <property type="entry name" value="PYRUVATE, PHOSPHATE DIKINASE REGULATORY PROTEIN 1, CHLOROPLASTIC"/>
    <property type="match status" value="1"/>
</dbReference>
<dbReference type="PANTHER" id="PTHR31756:SF3">
    <property type="entry name" value="PYRUVATE, PHOSPHATE DIKINASE REGULATORY PROTEIN 1, CHLOROPLASTIC"/>
    <property type="match status" value="1"/>
</dbReference>
<dbReference type="Pfam" id="PF03618">
    <property type="entry name" value="Kinase-PPPase"/>
    <property type="match status" value="1"/>
</dbReference>
<sequence>MDNVVDRHVFYISDGTAITAEVLGHAVMSQFPVTISSITLPFVENESRARAVKDQIDAIYQQTGVRPLVFYSIVLPEIRAIILQSEGFCQDIVQALVAPLQQEMKLDPTPIAHRTHGLNPGNLNKYDARIAAIDYTLAHDDGISLRNLDQAQVILLGVSRCGKTPTSLYLAMQFGIRAANYPFIADDMDNLTLPTSLKPLQHKLFGLTIDPERLAAIREERRENSRYASLRQCRMEVAEVEALYRKNQIPCLNSTNYSVEEIATKILDIMGLNRRMY</sequence>
<gene>
    <name evidence="1" type="primary">ppsR</name>
    <name type="ordered locus">SNSL254_A1459</name>
</gene>